<keyword id="KW-0012">Acyltransferase</keyword>
<keyword id="KW-0441">Lipid A biosynthesis</keyword>
<keyword id="KW-0444">Lipid biosynthesis</keyword>
<keyword id="KW-0443">Lipid metabolism</keyword>
<keyword id="KW-1185">Reference proteome</keyword>
<keyword id="KW-0677">Repeat</keyword>
<keyword id="KW-0808">Transferase</keyword>
<feature type="chain" id="PRO_0000264440" description="UDP-3-O-(3-hydroxymyristoyl)glucosamine N-acyltransferase">
    <location>
        <begin position="1"/>
        <end position="341"/>
    </location>
</feature>
<feature type="active site" description="Proton acceptor" evidence="1">
    <location>
        <position position="239"/>
    </location>
</feature>
<accession>Q3Z5H9</accession>
<organism>
    <name type="scientific">Shigella sonnei (strain Ss046)</name>
    <dbReference type="NCBI Taxonomy" id="300269"/>
    <lineage>
        <taxon>Bacteria</taxon>
        <taxon>Pseudomonadati</taxon>
        <taxon>Pseudomonadota</taxon>
        <taxon>Gammaproteobacteria</taxon>
        <taxon>Enterobacterales</taxon>
        <taxon>Enterobacteriaceae</taxon>
        <taxon>Shigella</taxon>
    </lineage>
</organism>
<dbReference type="EC" id="2.3.1.191" evidence="1"/>
<dbReference type="EMBL" id="CP000038">
    <property type="protein sequence ID" value="AAZ86983.1"/>
    <property type="molecule type" value="Genomic_DNA"/>
</dbReference>
<dbReference type="RefSeq" id="WP_001139282.1">
    <property type="nucleotide sequence ID" value="NC_007384.1"/>
</dbReference>
<dbReference type="SMR" id="Q3Z5H9"/>
<dbReference type="GeneID" id="93777246"/>
<dbReference type="KEGG" id="ssn:SSON_0191"/>
<dbReference type="HOGENOM" id="CLU_049865_0_1_6"/>
<dbReference type="UniPathway" id="UPA00359">
    <property type="reaction ID" value="UER00479"/>
</dbReference>
<dbReference type="Proteomes" id="UP000002529">
    <property type="component" value="Chromosome"/>
</dbReference>
<dbReference type="GO" id="GO:0016020">
    <property type="term" value="C:membrane"/>
    <property type="evidence" value="ECO:0007669"/>
    <property type="project" value="GOC"/>
</dbReference>
<dbReference type="GO" id="GO:0016410">
    <property type="term" value="F:N-acyltransferase activity"/>
    <property type="evidence" value="ECO:0007669"/>
    <property type="project" value="InterPro"/>
</dbReference>
<dbReference type="GO" id="GO:0103118">
    <property type="term" value="F:UDP-3-O-(R-3-hydroxymyristoyl)-glucosamine N-acyltransferase activity"/>
    <property type="evidence" value="ECO:0007669"/>
    <property type="project" value="UniProtKB-EC"/>
</dbReference>
<dbReference type="GO" id="GO:0009245">
    <property type="term" value="P:lipid A biosynthetic process"/>
    <property type="evidence" value="ECO:0007669"/>
    <property type="project" value="UniProtKB-UniRule"/>
</dbReference>
<dbReference type="CDD" id="cd03352">
    <property type="entry name" value="LbH_LpxD"/>
    <property type="match status" value="1"/>
</dbReference>
<dbReference type="FunFam" id="1.20.5.170:FF:000032">
    <property type="entry name" value="UDP-3-O-(3-hydroxymyristoyl)glucosamine N-acyltransferase"/>
    <property type="match status" value="1"/>
</dbReference>
<dbReference type="FunFam" id="2.160.10.10:FF:000005">
    <property type="entry name" value="UDP-3-O-(3-hydroxymyristoyl)glucosamine N-acyltransferase"/>
    <property type="match status" value="1"/>
</dbReference>
<dbReference type="FunFam" id="3.40.1390.10:FF:000001">
    <property type="entry name" value="UDP-3-O-(3-hydroxymyristoyl)glucosamine N-acyltransferase"/>
    <property type="match status" value="1"/>
</dbReference>
<dbReference type="Gene3D" id="1.20.5.170">
    <property type="match status" value="1"/>
</dbReference>
<dbReference type="Gene3D" id="2.160.10.10">
    <property type="entry name" value="Hexapeptide repeat proteins"/>
    <property type="match status" value="1"/>
</dbReference>
<dbReference type="Gene3D" id="3.40.1390.10">
    <property type="entry name" value="MurE/MurF, N-terminal domain"/>
    <property type="match status" value="1"/>
</dbReference>
<dbReference type="HAMAP" id="MF_00523">
    <property type="entry name" value="LpxD"/>
    <property type="match status" value="1"/>
</dbReference>
<dbReference type="InterPro" id="IPR001451">
    <property type="entry name" value="Hexapep"/>
</dbReference>
<dbReference type="InterPro" id="IPR018357">
    <property type="entry name" value="Hexapep_transf_CS"/>
</dbReference>
<dbReference type="InterPro" id="IPR007691">
    <property type="entry name" value="LpxD"/>
</dbReference>
<dbReference type="InterPro" id="IPR011004">
    <property type="entry name" value="Trimer_LpxA-like_sf"/>
</dbReference>
<dbReference type="InterPro" id="IPR020573">
    <property type="entry name" value="UDP_GlcNAc_AcTrfase_non-rep"/>
</dbReference>
<dbReference type="NCBIfam" id="TIGR01853">
    <property type="entry name" value="lipid_A_lpxD"/>
    <property type="match status" value="1"/>
</dbReference>
<dbReference type="NCBIfam" id="NF002060">
    <property type="entry name" value="PRK00892.1"/>
    <property type="match status" value="1"/>
</dbReference>
<dbReference type="PANTHER" id="PTHR43378">
    <property type="entry name" value="UDP-3-O-ACYLGLUCOSAMINE N-ACYLTRANSFERASE"/>
    <property type="match status" value="1"/>
</dbReference>
<dbReference type="PANTHER" id="PTHR43378:SF2">
    <property type="entry name" value="UDP-3-O-ACYLGLUCOSAMINE N-ACYLTRANSFERASE 1, MITOCHONDRIAL-RELATED"/>
    <property type="match status" value="1"/>
</dbReference>
<dbReference type="Pfam" id="PF00132">
    <property type="entry name" value="Hexapep"/>
    <property type="match status" value="3"/>
</dbReference>
<dbReference type="Pfam" id="PF04613">
    <property type="entry name" value="LpxD"/>
    <property type="match status" value="1"/>
</dbReference>
<dbReference type="SUPFAM" id="SSF51161">
    <property type="entry name" value="Trimeric LpxA-like enzymes"/>
    <property type="match status" value="1"/>
</dbReference>
<dbReference type="PROSITE" id="PS00101">
    <property type="entry name" value="HEXAPEP_TRANSFERASES"/>
    <property type="match status" value="4"/>
</dbReference>
<reference key="1">
    <citation type="journal article" date="2005" name="Nucleic Acids Res.">
        <title>Genome dynamics and diversity of Shigella species, the etiologic agents of bacillary dysentery.</title>
        <authorList>
            <person name="Yang F."/>
            <person name="Yang J."/>
            <person name="Zhang X."/>
            <person name="Chen L."/>
            <person name="Jiang Y."/>
            <person name="Yan Y."/>
            <person name="Tang X."/>
            <person name="Wang J."/>
            <person name="Xiong Z."/>
            <person name="Dong J."/>
            <person name="Xue Y."/>
            <person name="Zhu Y."/>
            <person name="Xu X."/>
            <person name="Sun L."/>
            <person name="Chen S."/>
            <person name="Nie H."/>
            <person name="Peng J."/>
            <person name="Xu J."/>
            <person name="Wang Y."/>
            <person name="Yuan Z."/>
            <person name="Wen Y."/>
            <person name="Yao Z."/>
            <person name="Shen Y."/>
            <person name="Qiang B."/>
            <person name="Hou Y."/>
            <person name="Yu J."/>
            <person name="Jin Q."/>
        </authorList>
    </citation>
    <scope>NUCLEOTIDE SEQUENCE [LARGE SCALE GENOMIC DNA]</scope>
    <source>
        <strain>Ss046</strain>
    </source>
</reference>
<evidence type="ECO:0000255" key="1">
    <source>
        <dbReference type="HAMAP-Rule" id="MF_00523"/>
    </source>
</evidence>
<name>LPXD_SHISS</name>
<proteinExistence type="inferred from homology"/>
<sequence length="341" mass="36024">MPSIRLADLAQQLDAELHGDGDIVITGVASMQSAQTGHITFMVNPKYREHLGLCQASAVVMTQDDLPFAKSAALVVKNPYLTYARMAQILDTTPQPAQNIAPSAVIDATAKLGNNVSIGANAVIESGVELGDNVIIGAGCFVGKNSKIGAGSRLWANVTIYHEIQIGQNCLIQSGTVVGADGFGYANDRGNWVKIPQIGRVIIGDRVEIGACTTIDRGALDDTVIGNGVIIDNQCQIAHNVVIGDNTAVAGGVIMAGSLKIGRYCMIGGASVINGHMEICDKVTVTGMGMVMRPITEPGVYSSGIPLQPNKVWRKTAALVMNIDDMSKRLKSLERKVNQQD</sequence>
<protein>
    <recommendedName>
        <fullName evidence="1">UDP-3-O-(3-hydroxymyristoyl)glucosamine N-acyltransferase</fullName>
        <shortName evidence="1">UDP-3-O-(3-OHC14)-GlcN N-acyltransferase</shortName>
        <ecNumber evidence="1">2.3.1.191</ecNumber>
    </recommendedName>
    <alternativeName>
        <fullName evidence="1">UDP-3-O-(3-hydroxytetradecanoyl)glucosamine N-acyltransferase</fullName>
    </alternativeName>
</protein>
<gene>
    <name evidence="1" type="primary">lpxD</name>
    <name type="ordered locus">SSON_0191</name>
</gene>
<comment type="function">
    <text evidence="1">Catalyzes the N-acylation of UDP-3-O-(hydroxytetradecanoyl)glucosamine using 3-hydroxytetradecanoyl-ACP as the acyl donor. Is involved in the biosynthesis of lipid A, a phosphorylated glycolipid that anchors the lipopolysaccharide to the outer membrane of the cell.</text>
</comment>
<comment type="catalytic activity">
    <reaction evidence="1">
        <text>a UDP-3-O-[(3R)-3-hydroxyacyl]-alpha-D-glucosamine + a (3R)-hydroxyacyl-[ACP] = a UDP-2-N,3-O-bis[(3R)-3-hydroxyacyl]-alpha-D-glucosamine + holo-[ACP] + H(+)</text>
        <dbReference type="Rhea" id="RHEA:53836"/>
        <dbReference type="Rhea" id="RHEA-COMP:9685"/>
        <dbReference type="Rhea" id="RHEA-COMP:9945"/>
        <dbReference type="ChEBI" id="CHEBI:15378"/>
        <dbReference type="ChEBI" id="CHEBI:64479"/>
        <dbReference type="ChEBI" id="CHEBI:78827"/>
        <dbReference type="ChEBI" id="CHEBI:137740"/>
        <dbReference type="ChEBI" id="CHEBI:137748"/>
        <dbReference type="EC" id="2.3.1.191"/>
    </reaction>
</comment>
<comment type="catalytic activity">
    <reaction evidence="1">
        <text>UDP-3-O-[(3R)-3-hydroxytetradecanoyl]-alpha-D-glucosamine + (3R)-hydroxytetradecanoyl-[ACP] = UDP-2-N,3-O-bis[(3R)-3-hydroxytetradecanoyl]-alpha-D-glucosamine + holo-[ACP] + H(+)</text>
        <dbReference type="Rhea" id="RHEA:17817"/>
        <dbReference type="Rhea" id="RHEA-COMP:9646"/>
        <dbReference type="Rhea" id="RHEA-COMP:9685"/>
        <dbReference type="ChEBI" id="CHEBI:15378"/>
        <dbReference type="ChEBI" id="CHEBI:64479"/>
        <dbReference type="ChEBI" id="CHEBI:71573"/>
        <dbReference type="ChEBI" id="CHEBI:78474"/>
        <dbReference type="ChEBI" id="CHEBI:78847"/>
    </reaction>
</comment>
<comment type="pathway">
    <text evidence="1">Glycolipid biosynthesis; lipid IV(A) biosynthesis; lipid IV(A) from (3R)-3-hydroxytetradecanoyl-[acyl-carrier-protein] and UDP-N-acetyl-alpha-D-glucosamine: step 3/6.</text>
</comment>
<comment type="subunit">
    <text evidence="1">Homotrimer.</text>
</comment>
<comment type="similarity">
    <text evidence="1">Belongs to the transferase hexapeptide repeat family. LpxD subfamily.</text>
</comment>